<accession>Q4L7I2</accession>
<reference key="1">
    <citation type="journal article" date="2005" name="J. Bacteriol.">
        <title>Whole-genome sequencing of Staphylococcus haemolyticus uncovers the extreme plasticity of its genome and the evolution of human-colonizing staphylococcal species.</title>
        <authorList>
            <person name="Takeuchi F."/>
            <person name="Watanabe S."/>
            <person name="Baba T."/>
            <person name="Yuzawa H."/>
            <person name="Ito T."/>
            <person name="Morimoto Y."/>
            <person name="Kuroda M."/>
            <person name="Cui L."/>
            <person name="Takahashi M."/>
            <person name="Ankai A."/>
            <person name="Baba S."/>
            <person name="Fukui S."/>
            <person name="Lee J.C."/>
            <person name="Hiramatsu K."/>
        </authorList>
    </citation>
    <scope>NUCLEOTIDE SEQUENCE [LARGE SCALE GENOMIC DNA]</scope>
    <source>
        <strain>JCSC1435</strain>
    </source>
</reference>
<comment type="similarity">
    <text evidence="2">Belongs to the peptidase C56 family.</text>
</comment>
<protein>
    <recommendedName>
        <fullName>Uncharacterized protein SH1084</fullName>
    </recommendedName>
</protein>
<evidence type="ECO:0000255" key="1">
    <source>
        <dbReference type="PROSITE-ProRule" id="PRU00608"/>
    </source>
</evidence>
<evidence type="ECO:0000305" key="2"/>
<dbReference type="EMBL" id="AP006716">
    <property type="protein sequence ID" value="BAE04393.1"/>
    <property type="molecule type" value="Genomic_DNA"/>
</dbReference>
<dbReference type="RefSeq" id="WP_011275387.1">
    <property type="nucleotide sequence ID" value="NC_007168.1"/>
</dbReference>
<dbReference type="SMR" id="Q4L7I2"/>
<dbReference type="MEROPS" id="C56.001"/>
<dbReference type="KEGG" id="sha:SH1084"/>
<dbReference type="eggNOG" id="COG0693">
    <property type="taxonomic scope" value="Bacteria"/>
</dbReference>
<dbReference type="HOGENOM" id="CLU_000445_44_4_9"/>
<dbReference type="OrthoDB" id="9792284at2"/>
<dbReference type="Proteomes" id="UP000000543">
    <property type="component" value="Chromosome"/>
</dbReference>
<dbReference type="CDD" id="cd03134">
    <property type="entry name" value="GATase1_PfpI_like"/>
    <property type="match status" value="1"/>
</dbReference>
<dbReference type="Gene3D" id="3.40.50.880">
    <property type="match status" value="1"/>
</dbReference>
<dbReference type="InterPro" id="IPR006286">
    <property type="entry name" value="C56_PfpI-like"/>
</dbReference>
<dbReference type="InterPro" id="IPR029062">
    <property type="entry name" value="Class_I_gatase-like"/>
</dbReference>
<dbReference type="InterPro" id="IPR002818">
    <property type="entry name" value="DJ-1/PfpI"/>
</dbReference>
<dbReference type="NCBIfam" id="TIGR01382">
    <property type="entry name" value="PfpI"/>
    <property type="match status" value="1"/>
</dbReference>
<dbReference type="PANTHER" id="PTHR42733">
    <property type="entry name" value="DJ-1 PROTEIN"/>
    <property type="match status" value="1"/>
</dbReference>
<dbReference type="PANTHER" id="PTHR42733:SF2">
    <property type="entry name" value="DJ-1_THIJ_PFPI FAMILY PROTEIN"/>
    <property type="match status" value="1"/>
</dbReference>
<dbReference type="Pfam" id="PF01965">
    <property type="entry name" value="DJ-1_PfpI"/>
    <property type="match status" value="1"/>
</dbReference>
<dbReference type="SUPFAM" id="SSF52317">
    <property type="entry name" value="Class I glutamine amidotransferase-like"/>
    <property type="match status" value="1"/>
</dbReference>
<dbReference type="PROSITE" id="PS51276">
    <property type="entry name" value="PEPTIDASE_C56_PFPI"/>
    <property type="match status" value="1"/>
</dbReference>
<sequence length="172" mass="18674">MTKKVAIILSNEFEDIELTSPKEAIEEAGFETEIIGDTANAEVVGKHGEKVIVDVSIADAKPEDYDGLLIPGGFSPDHLRGDAEGRYGTFAKYFTKNDVPAFAICHGPQILIDTDDLNGRTLTAVLNVRKDLSNAGANVVDESVVVDKNIVTSRTPDDLDDFNREIVKQLQA</sequence>
<gene>
    <name type="ordered locus">SH1084</name>
</gene>
<name>Y1084_STAHJ</name>
<organism>
    <name type="scientific">Staphylococcus haemolyticus (strain JCSC1435)</name>
    <dbReference type="NCBI Taxonomy" id="279808"/>
    <lineage>
        <taxon>Bacteria</taxon>
        <taxon>Bacillati</taxon>
        <taxon>Bacillota</taxon>
        <taxon>Bacilli</taxon>
        <taxon>Bacillales</taxon>
        <taxon>Staphylococcaceae</taxon>
        <taxon>Staphylococcus</taxon>
    </lineage>
</organism>
<proteinExistence type="inferred from homology"/>
<feature type="chain" id="PRO_0000157843" description="Uncharacterized protein SH1084">
    <location>
        <begin position="1"/>
        <end position="172"/>
    </location>
</feature>
<feature type="domain" description="PfpI endopeptidase" evidence="1">
    <location>
        <begin position="3"/>
        <end position="171"/>
    </location>
</feature>